<name>ENDA_METAC</name>
<dbReference type="EC" id="4.6.1.16" evidence="2"/>
<dbReference type="EMBL" id="AE010299">
    <property type="protein sequence ID" value="AAM06979.1"/>
    <property type="molecule type" value="Genomic_DNA"/>
</dbReference>
<dbReference type="RefSeq" id="WP_011023532.1">
    <property type="nucleotide sequence ID" value="NC_003552.1"/>
</dbReference>
<dbReference type="SMR" id="Q8TGX1"/>
<dbReference type="STRING" id="188937.MA_3624"/>
<dbReference type="EnsemblBacteria" id="AAM06979">
    <property type="protein sequence ID" value="AAM06979"/>
    <property type="gene ID" value="MA_3624"/>
</dbReference>
<dbReference type="GeneID" id="1475517"/>
<dbReference type="KEGG" id="mac:MA_3624"/>
<dbReference type="HOGENOM" id="CLU_791347_0_0_2"/>
<dbReference type="InParanoid" id="Q8TGX1"/>
<dbReference type="OrthoDB" id="46045at2157"/>
<dbReference type="PhylomeDB" id="Q8TGX1"/>
<dbReference type="Proteomes" id="UP000002487">
    <property type="component" value="Chromosome"/>
</dbReference>
<dbReference type="GO" id="GO:0005737">
    <property type="term" value="C:cytoplasm"/>
    <property type="evidence" value="ECO:0000318"/>
    <property type="project" value="GO_Central"/>
</dbReference>
<dbReference type="GO" id="GO:0004519">
    <property type="term" value="F:endonuclease activity"/>
    <property type="evidence" value="ECO:0000318"/>
    <property type="project" value="GO_Central"/>
</dbReference>
<dbReference type="GO" id="GO:0016829">
    <property type="term" value="F:lyase activity"/>
    <property type="evidence" value="ECO:0007669"/>
    <property type="project" value="UniProtKB-KW"/>
</dbReference>
<dbReference type="GO" id="GO:0003676">
    <property type="term" value="F:nucleic acid binding"/>
    <property type="evidence" value="ECO:0007669"/>
    <property type="project" value="InterPro"/>
</dbReference>
<dbReference type="GO" id="GO:0000213">
    <property type="term" value="F:tRNA-intron endonuclease activity"/>
    <property type="evidence" value="ECO:0007669"/>
    <property type="project" value="UniProtKB-UniRule"/>
</dbReference>
<dbReference type="GO" id="GO:0008033">
    <property type="term" value="P:tRNA processing"/>
    <property type="evidence" value="ECO:0000318"/>
    <property type="project" value="GO_Central"/>
</dbReference>
<dbReference type="GO" id="GO:0006388">
    <property type="term" value="P:tRNA splicing, via endonucleolytic cleavage and ligation"/>
    <property type="evidence" value="ECO:0007669"/>
    <property type="project" value="UniProtKB-UniRule"/>
</dbReference>
<dbReference type="CDD" id="cd22363">
    <property type="entry name" value="tRNA-intron_lyase_C"/>
    <property type="match status" value="2"/>
</dbReference>
<dbReference type="FunFam" id="3.40.1170.20:FF:000001">
    <property type="entry name" value="tRNA-splicing endonuclease"/>
    <property type="match status" value="1"/>
</dbReference>
<dbReference type="FunFam" id="3.40.1350.10:FF:000006">
    <property type="entry name" value="tRNA-splicing endonuclease"/>
    <property type="match status" value="1"/>
</dbReference>
<dbReference type="FunFam" id="3.40.1350.150:FF:000002">
    <property type="entry name" value="tRNA-splicing endonuclease"/>
    <property type="match status" value="1"/>
</dbReference>
<dbReference type="Gene3D" id="3.40.1350.10">
    <property type="match status" value="1"/>
</dbReference>
<dbReference type="Gene3D" id="3.40.1350.150">
    <property type="match status" value="1"/>
</dbReference>
<dbReference type="Gene3D" id="3.40.1170.20">
    <property type="entry name" value="tRNA intron endonuclease, N-terminal domain"/>
    <property type="match status" value="1"/>
</dbReference>
<dbReference type="HAMAP" id="MF_01834">
    <property type="entry name" value="EndA_long"/>
    <property type="match status" value="1"/>
</dbReference>
<dbReference type="InterPro" id="IPR011856">
    <property type="entry name" value="tRNA_endonuc-like_dom_sf"/>
</dbReference>
<dbReference type="InterPro" id="IPR036167">
    <property type="entry name" value="tRNA_intron_Endo_cat-like_sf"/>
</dbReference>
<dbReference type="InterPro" id="IPR006677">
    <property type="entry name" value="tRNA_intron_Endonuc_cat-like"/>
</dbReference>
<dbReference type="InterPro" id="IPR006678">
    <property type="entry name" value="tRNA_intron_Endonuc_N"/>
</dbReference>
<dbReference type="InterPro" id="IPR036740">
    <property type="entry name" value="tRNA_intron_Endonuc_N_sf"/>
</dbReference>
<dbReference type="InterPro" id="IPR006676">
    <property type="entry name" value="tRNA_splic"/>
</dbReference>
<dbReference type="InterPro" id="IPR023516">
    <property type="entry name" value="tRNA_splic_arch_long"/>
</dbReference>
<dbReference type="NCBIfam" id="TIGR00324">
    <property type="entry name" value="endA"/>
    <property type="match status" value="2"/>
</dbReference>
<dbReference type="NCBIfam" id="NF006795">
    <property type="entry name" value="PRK09300.1-3"/>
    <property type="match status" value="1"/>
</dbReference>
<dbReference type="PANTHER" id="PTHR21227">
    <property type="entry name" value="TRNA-SPLICING ENDONUCLEASE SUBUNIT SEN2"/>
    <property type="match status" value="1"/>
</dbReference>
<dbReference type="PANTHER" id="PTHR21227:SF0">
    <property type="entry name" value="TRNA-SPLICING ENDONUCLEASE SUBUNIT SEN2"/>
    <property type="match status" value="1"/>
</dbReference>
<dbReference type="Pfam" id="PF01974">
    <property type="entry name" value="tRNA_int_endo"/>
    <property type="match status" value="2"/>
</dbReference>
<dbReference type="Pfam" id="PF02778">
    <property type="entry name" value="tRNA_int_endo_N"/>
    <property type="match status" value="2"/>
</dbReference>
<dbReference type="SUPFAM" id="SSF53032">
    <property type="entry name" value="tRNA-intron endonuclease catalytic domain-like"/>
    <property type="match status" value="2"/>
</dbReference>
<dbReference type="SUPFAM" id="SSF55267">
    <property type="entry name" value="tRNA-intron endonuclease N-terminal domain-like"/>
    <property type="match status" value="2"/>
</dbReference>
<evidence type="ECO:0000250" key="1"/>
<evidence type="ECO:0000255" key="2">
    <source>
        <dbReference type="HAMAP-Rule" id="MF_01834"/>
    </source>
</evidence>
<sequence length="350" mass="40133">MKTQLEGDRVLAGKEAVAELYKTGYFGRPREDGLELSLVEAAYLQFRGKIEIELEGRKLDFRALFEQASLRQPNFELKYIVYKDLKERGYYVQPSAADFRVYPRGSHPGKSAAKIFVHVLSERQPLPVKLLQDSVISAENVHKQFILAVVDEESDLTFYEIKTASPQGEMPEPYPEVKTDATFLEDRVIAWDAEASGALYAGGFYGKMLDPERLQLSLVESLYLFSRGIIVVRDRKDRIFSFDEFVEKASEIESSFLRKYGAYKALRDSGHVVKTGFKFGTHFRVYRKVESIEKIPHSEYLVNVIPSDYEFRLPVMSGAVRLANSVRKRMLFAVEKEEGVEYLDISRVKM</sequence>
<accession>Q8TGX1</accession>
<feature type="chain" id="PRO_0000109487" description="tRNA-splicing endonuclease">
    <location>
        <begin position="1"/>
        <end position="350"/>
    </location>
</feature>
<feature type="active site" evidence="2">
    <location>
        <position position="286"/>
    </location>
</feature>
<feature type="active site" evidence="2">
    <location>
        <position position="297"/>
    </location>
</feature>
<feature type="active site" evidence="2">
    <location>
        <position position="328"/>
    </location>
</feature>
<comment type="function">
    <text evidence="1">Endonuclease that removes tRNA introns. Cleaves pre-tRNA at the 5'- and 3'-splice sites to release the intron. The products are an intron and two tRNA half-molecules bearing 2',3' cyclic phosphate and 5'-OH termini. Recognizes a pseudosymmetric substrate in which 2 bulged loops of 3 bases are separated by a stem of 4 bp (By similarity).</text>
</comment>
<comment type="catalytic activity">
    <reaction evidence="2">
        <text>pretRNA = a 3'-half-tRNA molecule with a 5'-OH end + a 5'-half-tRNA molecule with a 2',3'-cyclic phosphate end + an intron with a 2',3'-cyclic phosphate and a 5'-hydroxyl terminus.</text>
        <dbReference type="EC" id="4.6.1.16"/>
    </reaction>
</comment>
<comment type="subunit">
    <text evidence="2">Homodimer.</text>
</comment>
<comment type="similarity">
    <text evidence="2">Belongs to the tRNA-intron endonuclease family. Archaeal long subfamily.</text>
</comment>
<gene>
    <name evidence="2" type="primary">endA</name>
    <name type="ordered locus">MA_3624</name>
</gene>
<organism>
    <name type="scientific">Methanosarcina acetivorans (strain ATCC 35395 / DSM 2834 / JCM 12185 / C2A)</name>
    <dbReference type="NCBI Taxonomy" id="188937"/>
    <lineage>
        <taxon>Archaea</taxon>
        <taxon>Methanobacteriati</taxon>
        <taxon>Methanobacteriota</taxon>
        <taxon>Stenosarchaea group</taxon>
        <taxon>Methanomicrobia</taxon>
        <taxon>Methanosarcinales</taxon>
        <taxon>Methanosarcinaceae</taxon>
        <taxon>Methanosarcina</taxon>
    </lineage>
</organism>
<reference key="1">
    <citation type="journal article" date="2002" name="Genome Res.">
        <title>The genome of Methanosarcina acetivorans reveals extensive metabolic and physiological diversity.</title>
        <authorList>
            <person name="Galagan J.E."/>
            <person name="Nusbaum C."/>
            <person name="Roy A."/>
            <person name="Endrizzi M.G."/>
            <person name="Macdonald P."/>
            <person name="FitzHugh W."/>
            <person name="Calvo S."/>
            <person name="Engels R."/>
            <person name="Smirnov S."/>
            <person name="Atnoor D."/>
            <person name="Brown A."/>
            <person name="Allen N."/>
            <person name="Naylor J."/>
            <person name="Stange-Thomann N."/>
            <person name="DeArellano K."/>
            <person name="Johnson R."/>
            <person name="Linton L."/>
            <person name="McEwan P."/>
            <person name="McKernan K."/>
            <person name="Talamas J."/>
            <person name="Tirrell A."/>
            <person name="Ye W."/>
            <person name="Zimmer A."/>
            <person name="Barber R.D."/>
            <person name="Cann I."/>
            <person name="Graham D.E."/>
            <person name="Grahame D.A."/>
            <person name="Guss A.M."/>
            <person name="Hedderich R."/>
            <person name="Ingram-Smith C."/>
            <person name="Kuettner H.C."/>
            <person name="Krzycki J.A."/>
            <person name="Leigh J.A."/>
            <person name="Li W."/>
            <person name="Liu J."/>
            <person name="Mukhopadhyay B."/>
            <person name="Reeve J.N."/>
            <person name="Smith K."/>
            <person name="Springer T.A."/>
            <person name="Umayam L.A."/>
            <person name="White O."/>
            <person name="White R.H."/>
            <person name="de Macario E.C."/>
            <person name="Ferry J.G."/>
            <person name="Jarrell K.F."/>
            <person name="Jing H."/>
            <person name="Macario A.J.L."/>
            <person name="Paulsen I.T."/>
            <person name="Pritchett M."/>
            <person name="Sowers K.R."/>
            <person name="Swanson R.V."/>
            <person name="Zinder S.H."/>
            <person name="Lander E."/>
            <person name="Metcalf W.W."/>
            <person name="Birren B."/>
        </authorList>
    </citation>
    <scope>NUCLEOTIDE SEQUENCE [LARGE SCALE GENOMIC DNA]</scope>
    <source>
        <strain>ATCC 35395 / DSM 2834 / JCM 12185 / C2A</strain>
    </source>
</reference>
<protein>
    <recommendedName>
        <fullName evidence="2">tRNA-splicing endonuclease</fullName>
        <ecNumber evidence="2">4.6.1.16</ecNumber>
    </recommendedName>
    <alternativeName>
        <fullName evidence="2">tRNA-intron endonuclease</fullName>
    </alternativeName>
</protein>
<proteinExistence type="inferred from homology"/>
<keyword id="KW-0456">Lyase</keyword>
<keyword id="KW-1185">Reference proteome</keyword>
<keyword id="KW-0819">tRNA processing</keyword>